<gene>
    <name evidence="1" type="primary">trmD</name>
    <name type="ordered locus">Daro_3064</name>
</gene>
<name>TRMD_DECAR</name>
<proteinExistence type="inferred from homology"/>
<evidence type="ECO:0000255" key="1">
    <source>
        <dbReference type="HAMAP-Rule" id="MF_00605"/>
    </source>
</evidence>
<sequence>MIRFDCITLFPEMFAAVTESGITRRALEEQRWQWQGWNPRDFAENAWRRVDDRPFGGGPGMVMQPGPLEKAIAAAKSQQREAGLAKSRVIYLSPQGAPLTHERVMQLATGDEGLILLCGRYEGIDERLIERCVDEEISIGDFVLSGGELPAMVLIDAVVRQLPGVLGDAASAVEDSFVGGLLDCPHYTRPEVYEGVSVPETLMSGDHKRIRRWRLKQSLARTRKRRPDLLAHRVLSAEETQLLTEISGEEQCGE</sequence>
<feature type="chain" id="PRO_0000257410" description="tRNA (guanine-N(1)-)-methyltransferase">
    <location>
        <begin position="1"/>
        <end position="254"/>
    </location>
</feature>
<feature type="binding site" evidence="1">
    <location>
        <position position="119"/>
    </location>
    <ligand>
        <name>S-adenosyl-L-methionine</name>
        <dbReference type="ChEBI" id="CHEBI:59789"/>
    </ligand>
</feature>
<feature type="binding site" evidence="1">
    <location>
        <begin position="139"/>
        <end position="144"/>
    </location>
    <ligand>
        <name>S-adenosyl-L-methionine</name>
        <dbReference type="ChEBI" id="CHEBI:59789"/>
    </ligand>
</feature>
<reference key="1">
    <citation type="journal article" date="2009" name="BMC Genomics">
        <title>Metabolic analysis of the soil microbe Dechloromonas aromatica str. RCB: indications of a surprisingly complex life-style and cryptic anaerobic pathways for aromatic degradation.</title>
        <authorList>
            <person name="Salinero K.K."/>
            <person name="Keller K."/>
            <person name="Feil W.S."/>
            <person name="Feil H."/>
            <person name="Trong S."/>
            <person name="Di Bartolo G."/>
            <person name="Lapidus A."/>
        </authorList>
    </citation>
    <scope>NUCLEOTIDE SEQUENCE [LARGE SCALE GENOMIC DNA]</scope>
    <source>
        <strain>RCB</strain>
    </source>
</reference>
<protein>
    <recommendedName>
        <fullName evidence="1">tRNA (guanine-N(1)-)-methyltransferase</fullName>
        <ecNumber evidence="1">2.1.1.228</ecNumber>
    </recommendedName>
    <alternativeName>
        <fullName evidence="1">M1G-methyltransferase</fullName>
    </alternativeName>
    <alternativeName>
        <fullName evidence="1">tRNA [GM37] methyltransferase</fullName>
    </alternativeName>
</protein>
<organism>
    <name type="scientific">Dechloromonas aromatica (strain RCB)</name>
    <dbReference type="NCBI Taxonomy" id="159087"/>
    <lineage>
        <taxon>Bacteria</taxon>
        <taxon>Pseudomonadati</taxon>
        <taxon>Pseudomonadota</taxon>
        <taxon>Betaproteobacteria</taxon>
        <taxon>Rhodocyclales</taxon>
        <taxon>Azonexaceae</taxon>
        <taxon>Dechloromonas</taxon>
    </lineage>
</organism>
<dbReference type="EC" id="2.1.1.228" evidence="1"/>
<dbReference type="EMBL" id="CP000089">
    <property type="protein sequence ID" value="AAZ47794.1"/>
    <property type="molecule type" value="Genomic_DNA"/>
</dbReference>
<dbReference type="SMR" id="Q47BI7"/>
<dbReference type="STRING" id="159087.Daro_3064"/>
<dbReference type="KEGG" id="dar:Daro_3064"/>
<dbReference type="eggNOG" id="COG0336">
    <property type="taxonomic scope" value="Bacteria"/>
</dbReference>
<dbReference type="HOGENOM" id="CLU_047363_0_2_4"/>
<dbReference type="GO" id="GO:0005829">
    <property type="term" value="C:cytosol"/>
    <property type="evidence" value="ECO:0007669"/>
    <property type="project" value="TreeGrafter"/>
</dbReference>
<dbReference type="GO" id="GO:0052906">
    <property type="term" value="F:tRNA (guanine(37)-N1)-methyltransferase activity"/>
    <property type="evidence" value="ECO:0007669"/>
    <property type="project" value="UniProtKB-UniRule"/>
</dbReference>
<dbReference type="GO" id="GO:0002939">
    <property type="term" value="P:tRNA N1-guanine methylation"/>
    <property type="evidence" value="ECO:0007669"/>
    <property type="project" value="TreeGrafter"/>
</dbReference>
<dbReference type="CDD" id="cd18080">
    <property type="entry name" value="TrmD-like"/>
    <property type="match status" value="1"/>
</dbReference>
<dbReference type="FunFam" id="1.10.1270.20:FF:000001">
    <property type="entry name" value="tRNA (guanine-N(1)-)-methyltransferase"/>
    <property type="match status" value="1"/>
</dbReference>
<dbReference type="FunFam" id="3.40.1280.10:FF:000001">
    <property type="entry name" value="tRNA (guanine-N(1)-)-methyltransferase"/>
    <property type="match status" value="1"/>
</dbReference>
<dbReference type="Gene3D" id="3.40.1280.10">
    <property type="match status" value="1"/>
</dbReference>
<dbReference type="Gene3D" id="1.10.1270.20">
    <property type="entry name" value="tRNA(m1g37)methyltransferase, domain 2"/>
    <property type="match status" value="1"/>
</dbReference>
<dbReference type="HAMAP" id="MF_00605">
    <property type="entry name" value="TrmD"/>
    <property type="match status" value="1"/>
</dbReference>
<dbReference type="InterPro" id="IPR029028">
    <property type="entry name" value="Alpha/beta_knot_MTases"/>
</dbReference>
<dbReference type="InterPro" id="IPR023148">
    <property type="entry name" value="tRNA_m1G_MeTrfase_C_sf"/>
</dbReference>
<dbReference type="InterPro" id="IPR002649">
    <property type="entry name" value="tRNA_m1G_MeTrfase_TrmD"/>
</dbReference>
<dbReference type="InterPro" id="IPR029026">
    <property type="entry name" value="tRNA_m1G_MTases_N"/>
</dbReference>
<dbReference type="InterPro" id="IPR016009">
    <property type="entry name" value="tRNA_MeTrfase_TRMD/TRM10"/>
</dbReference>
<dbReference type="NCBIfam" id="NF000648">
    <property type="entry name" value="PRK00026.1"/>
    <property type="match status" value="1"/>
</dbReference>
<dbReference type="NCBIfam" id="TIGR00088">
    <property type="entry name" value="trmD"/>
    <property type="match status" value="1"/>
</dbReference>
<dbReference type="PANTHER" id="PTHR46417">
    <property type="entry name" value="TRNA (GUANINE-N(1)-)-METHYLTRANSFERASE"/>
    <property type="match status" value="1"/>
</dbReference>
<dbReference type="PANTHER" id="PTHR46417:SF1">
    <property type="entry name" value="TRNA (GUANINE-N(1)-)-METHYLTRANSFERASE"/>
    <property type="match status" value="1"/>
</dbReference>
<dbReference type="Pfam" id="PF01746">
    <property type="entry name" value="tRNA_m1G_MT"/>
    <property type="match status" value="1"/>
</dbReference>
<dbReference type="PIRSF" id="PIRSF000386">
    <property type="entry name" value="tRNA_mtase"/>
    <property type="match status" value="1"/>
</dbReference>
<dbReference type="SUPFAM" id="SSF75217">
    <property type="entry name" value="alpha/beta knot"/>
    <property type="match status" value="1"/>
</dbReference>
<comment type="function">
    <text evidence="1">Specifically methylates guanosine-37 in various tRNAs.</text>
</comment>
<comment type="catalytic activity">
    <reaction evidence="1">
        <text>guanosine(37) in tRNA + S-adenosyl-L-methionine = N(1)-methylguanosine(37) in tRNA + S-adenosyl-L-homocysteine + H(+)</text>
        <dbReference type="Rhea" id="RHEA:36899"/>
        <dbReference type="Rhea" id="RHEA-COMP:10145"/>
        <dbReference type="Rhea" id="RHEA-COMP:10147"/>
        <dbReference type="ChEBI" id="CHEBI:15378"/>
        <dbReference type="ChEBI" id="CHEBI:57856"/>
        <dbReference type="ChEBI" id="CHEBI:59789"/>
        <dbReference type="ChEBI" id="CHEBI:73542"/>
        <dbReference type="ChEBI" id="CHEBI:74269"/>
        <dbReference type="EC" id="2.1.1.228"/>
    </reaction>
</comment>
<comment type="subunit">
    <text evidence="1">Homodimer.</text>
</comment>
<comment type="subcellular location">
    <subcellularLocation>
        <location evidence="1">Cytoplasm</location>
    </subcellularLocation>
</comment>
<comment type="similarity">
    <text evidence="1">Belongs to the RNA methyltransferase TrmD family.</text>
</comment>
<keyword id="KW-0963">Cytoplasm</keyword>
<keyword id="KW-0489">Methyltransferase</keyword>
<keyword id="KW-0949">S-adenosyl-L-methionine</keyword>
<keyword id="KW-0808">Transferase</keyword>
<keyword id="KW-0819">tRNA processing</keyword>
<accession>Q47BI7</accession>